<name>VM3B2_BOTJA</name>
<accession>Q0NZX9</accession>
<feature type="chain" id="PRO_0000329984" description="Zinc metalloproteinase-disintegrin-like bothrojarin-2">
    <location>
        <begin position="1" status="less than"/>
        <end position="218"/>
    </location>
</feature>
<feature type="domain" description="Disintegrin" evidence="2">
    <location>
        <begin position="14"/>
        <end position="100"/>
    </location>
</feature>
<feature type="short sequence motif" description="D/ECD-tripeptide">
    <location>
        <begin position="78"/>
        <end position="80"/>
    </location>
</feature>
<feature type="binding site" evidence="1">
    <location>
        <position position="16"/>
    </location>
    <ligand>
        <name>Ca(2+)</name>
        <dbReference type="ChEBI" id="CHEBI:29108"/>
    </ligand>
</feature>
<feature type="binding site" evidence="1">
    <location>
        <position position="21"/>
    </location>
    <ligand>
        <name>Ca(2+)</name>
        <dbReference type="ChEBI" id="CHEBI:29108"/>
    </ligand>
</feature>
<feature type="binding site" evidence="1">
    <location>
        <position position="23"/>
    </location>
    <ligand>
        <name>Ca(2+)</name>
        <dbReference type="ChEBI" id="CHEBI:29108"/>
    </ligand>
</feature>
<feature type="binding site" evidence="1">
    <location>
        <position position="26"/>
    </location>
    <ligand>
        <name>Ca(2+)</name>
        <dbReference type="ChEBI" id="CHEBI:29108"/>
    </ligand>
</feature>
<feature type="binding site" evidence="1">
    <location>
        <position position="29"/>
    </location>
    <ligand>
        <name>Ca(2+)</name>
        <dbReference type="ChEBI" id="CHEBI:29108"/>
    </ligand>
</feature>
<feature type="disulfide bond" evidence="2">
    <location>
        <begin position="28"/>
        <end position="46"/>
    </location>
</feature>
<feature type="disulfide bond" evidence="2">
    <location>
        <begin position="30"/>
        <end position="41"/>
    </location>
</feature>
<feature type="disulfide bond" evidence="2">
    <location>
        <begin position="40"/>
        <end position="63"/>
    </location>
</feature>
<feature type="disulfide bond" evidence="2">
    <location>
        <begin position="54"/>
        <end position="60"/>
    </location>
</feature>
<feature type="disulfide bond" evidence="2">
    <location>
        <begin position="59"/>
        <end position="85"/>
    </location>
</feature>
<feature type="disulfide bond" evidence="2">
    <location>
        <begin position="72"/>
        <end position="92"/>
    </location>
</feature>
<feature type="disulfide bond" evidence="2">
    <location>
        <begin position="79"/>
        <end position="111"/>
    </location>
</feature>
<feature type="disulfide bond" evidence="2">
    <location>
        <begin position="104"/>
        <end position="116"/>
    </location>
</feature>
<feature type="disulfide bond" evidence="2">
    <location>
        <begin position="123"/>
        <end position="173"/>
    </location>
</feature>
<feature type="disulfide bond" evidence="2">
    <location>
        <begin position="138"/>
        <end status="unknown"/>
    </location>
</feature>
<feature type="disulfide bond" evidence="2">
    <location>
        <begin position="151"/>
        <end position="161"/>
    </location>
</feature>
<feature type="disulfide bond" evidence="2">
    <location>
        <begin position="168"/>
        <end status="unknown"/>
    </location>
</feature>
<feature type="non-terminal residue">
    <location>
        <position position="1"/>
    </location>
</feature>
<dbReference type="EC" id="3.4.24.-"/>
<dbReference type="EMBL" id="DQ375437">
    <property type="protein sequence ID" value="ABD34830.1"/>
    <property type="molecule type" value="mRNA"/>
</dbReference>
<dbReference type="SMR" id="Q0NZX9"/>
<dbReference type="GO" id="GO:0005576">
    <property type="term" value="C:extracellular region"/>
    <property type="evidence" value="ECO:0007669"/>
    <property type="project" value="UniProtKB-SubCell"/>
</dbReference>
<dbReference type="GO" id="GO:0005886">
    <property type="term" value="C:plasma membrane"/>
    <property type="evidence" value="ECO:0007669"/>
    <property type="project" value="TreeGrafter"/>
</dbReference>
<dbReference type="GO" id="GO:0016787">
    <property type="term" value="F:hydrolase activity"/>
    <property type="evidence" value="ECO:0007669"/>
    <property type="project" value="UniProtKB-KW"/>
</dbReference>
<dbReference type="GO" id="GO:0046872">
    <property type="term" value="F:metal ion binding"/>
    <property type="evidence" value="ECO:0007669"/>
    <property type="project" value="UniProtKB-KW"/>
</dbReference>
<dbReference type="GO" id="GO:0090729">
    <property type="term" value="F:toxin activity"/>
    <property type="evidence" value="ECO:0007669"/>
    <property type="project" value="UniProtKB-KW"/>
</dbReference>
<dbReference type="FunFam" id="4.10.70.10:FF:000001">
    <property type="entry name" value="Disintegrin and metalloproteinase domain-containing protein 22"/>
    <property type="match status" value="1"/>
</dbReference>
<dbReference type="Gene3D" id="4.10.70.10">
    <property type="entry name" value="Disintegrin domain"/>
    <property type="match status" value="1"/>
</dbReference>
<dbReference type="InterPro" id="IPR006586">
    <property type="entry name" value="ADAM_Cys-rich"/>
</dbReference>
<dbReference type="InterPro" id="IPR018358">
    <property type="entry name" value="Disintegrin_CS"/>
</dbReference>
<dbReference type="InterPro" id="IPR001762">
    <property type="entry name" value="Disintegrin_dom"/>
</dbReference>
<dbReference type="InterPro" id="IPR036436">
    <property type="entry name" value="Disintegrin_dom_sf"/>
</dbReference>
<dbReference type="PANTHER" id="PTHR11905">
    <property type="entry name" value="ADAM A DISINTEGRIN AND METALLOPROTEASE DOMAIN"/>
    <property type="match status" value="1"/>
</dbReference>
<dbReference type="PANTHER" id="PTHR11905:SF32">
    <property type="entry name" value="DISINTEGRIN AND METALLOPROTEINASE DOMAIN-CONTAINING PROTEIN 28"/>
    <property type="match status" value="1"/>
</dbReference>
<dbReference type="Pfam" id="PF08516">
    <property type="entry name" value="ADAM_CR"/>
    <property type="match status" value="1"/>
</dbReference>
<dbReference type="Pfam" id="PF00200">
    <property type="entry name" value="Disintegrin"/>
    <property type="match status" value="1"/>
</dbReference>
<dbReference type="PRINTS" id="PR00289">
    <property type="entry name" value="DISINTEGRIN"/>
</dbReference>
<dbReference type="SMART" id="SM00608">
    <property type="entry name" value="ACR"/>
    <property type="match status" value="1"/>
</dbReference>
<dbReference type="SMART" id="SM00050">
    <property type="entry name" value="DISIN"/>
    <property type="match status" value="1"/>
</dbReference>
<dbReference type="SUPFAM" id="SSF57552">
    <property type="entry name" value="Blood coagulation inhibitor (disintegrin)"/>
    <property type="match status" value="1"/>
</dbReference>
<dbReference type="PROSITE" id="PS00427">
    <property type="entry name" value="DISINTEGRIN_1"/>
    <property type="match status" value="1"/>
</dbReference>
<dbReference type="PROSITE" id="PS50214">
    <property type="entry name" value="DISINTEGRIN_2"/>
    <property type="match status" value="1"/>
</dbReference>
<sequence length="218" mass="24286">RQNRHEASCRIVSPPVCGNELLEKGEECDCGSPRNCRDPCCDAATCKLHSWVECESGECCDQCRFIKAGNVCRPQRSECDIAESCTGQSAQCPTDDFHKNGQPCLSNYGYCYNGNCPIMHHQCYALFGSGAIVAQDGCFKFNDRGDKFFYCRKENVIITPCAQEDVKCGRLFCHTKKSECDFDYSEDPDYGMVDHGTKCADGKVCNSNRQCVDVTTAY</sequence>
<evidence type="ECO:0000250" key="1"/>
<evidence type="ECO:0000255" key="2">
    <source>
        <dbReference type="PROSITE-ProRule" id="PRU00068"/>
    </source>
</evidence>
<evidence type="ECO:0000269" key="3">
    <source>
    </source>
</evidence>
<evidence type="ECO:0000305" key="4"/>
<protein>
    <recommendedName>
        <fullName>Zinc metalloproteinase-disintegrin-like bothrojarin-2</fullName>
        <ecNumber>3.4.24.-</ecNumber>
    </recommendedName>
    <alternativeName>
        <fullName>Snake venom metalloproteinase</fullName>
        <shortName>SVMP</shortName>
    </alternativeName>
</protein>
<keyword id="KW-0106">Calcium</keyword>
<keyword id="KW-1217">Cell adhesion impairing toxin</keyword>
<keyword id="KW-1015">Disulfide bond</keyword>
<keyword id="KW-0325">Glycoprotein</keyword>
<keyword id="KW-1199">Hemostasis impairing toxin</keyword>
<keyword id="KW-0378">Hydrolase</keyword>
<keyword id="KW-0479">Metal-binding</keyword>
<keyword id="KW-1201">Platelet aggregation inhibiting toxin</keyword>
<keyword id="KW-0964">Secreted</keyword>
<keyword id="KW-0800">Toxin</keyword>
<reference key="1">
    <citation type="journal article" date="2006" name="Toxicon">
        <title>Molecular diversity of disintegrin-like domains within metalloproteinase precursors of Bothrops jararaca.</title>
        <authorList>
            <person name="Cidade D.A.P."/>
            <person name="Wermelinger L.S."/>
            <person name="Lobo-Hajdu G."/>
            <person name="Davila A.M.R."/>
            <person name="Bon C."/>
            <person name="Zingali R.B."/>
            <person name="Albano R.M."/>
        </authorList>
    </citation>
    <scope>NUCLEOTIDE SEQUENCE [MRNA]</scope>
    <source>
        <tissue>Venom gland</tissue>
    </source>
</reference>
<reference key="2">
    <citation type="journal article" date="2010" name="J. Proteome Res.">
        <title>Analysis of the ontogenetic variation in the venom proteome/peptidome of Bothrops jararaca reveals different strategies to deal with prey.</title>
        <authorList>
            <person name="Zelanis A."/>
            <person name="Tashima A.K."/>
            <person name="Rocha M.M."/>
            <person name="Furtado M.F."/>
            <person name="Camargo A.C."/>
            <person name="Ho P.L."/>
            <person name="Serrano S.M."/>
        </authorList>
    </citation>
    <scope>IDENTIFICATION BY MASS SPECTROMETRY</scope>
    <scope>DEVELOPMENTAL STAGE</scope>
    <scope>GLYCOSYLATION</scope>
    <source>
        <tissue>Venom</tissue>
    </source>
</reference>
<organism>
    <name type="scientific">Bothrops jararaca</name>
    <name type="common">Jararaca</name>
    <name type="synonym">Bothrops jajaraca</name>
    <dbReference type="NCBI Taxonomy" id="8724"/>
    <lineage>
        <taxon>Eukaryota</taxon>
        <taxon>Metazoa</taxon>
        <taxon>Chordata</taxon>
        <taxon>Craniata</taxon>
        <taxon>Vertebrata</taxon>
        <taxon>Euteleostomi</taxon>
        <taxon>Lepidosauria</taxon>
        <taxon>Squamata</taxon>
        <taxon>Bifurcata</taxon>
        <taxon>Unidentata</taxon>
        <taxon>Episquamata</taxon>
        <taxon>Toxicofera</taxon>
        <taxon>Serpentes</taxon>
        <taxon>Colubroidea</taxon>
        <taxon>Viperidae</taxon>
        <taxon>Crotalinae</taxon>
        <taxon>Bothrops</taxon>
    </lineage>
</organism>
<proteinExistence type="evidence at protein level"/>
<comment type="function">
    <text evidence="1">The hemorrhagic metalloproteinase-disintegrin-like bothrojarin-1 is a potent inhibitor of collagen-induced platelet aggregation by blockage of alpha-2/beta-1 (ITGA2/ITGB1) integrin. It does not present any fibrinogen-clotting activity (By similarity).</text>
</comment>
<comment type="cofactor">
    <cofactor evidence="1">
        <name>Zn(2+)</name>
        <dbReference type="ChEBI" id="CHEBI:29105"/>
    </cofactor>
    <text evidence="1">Binds 1 zinc ion per subunit.</text>
</comment>
<comment type="subunit">
    <text evidence="1">Monomer.</text>
</comment>
<comment type="subcellular location">
    <subcellularLocation>
        <location>Secreted</location>
    </subcellularLocation>
</comment>
<comment type="tissue specificity">
    <text>Expressed by the venom gland.</text>
</comment>
<comment type="developmental stage">
    <text evidence="3">This protein seems to be found in newborn B.jararaca venom but not in adult snake venom.</text>
</comment>
<comment type="PTM">
    <text evidence="3">Glycosylated.</text>
</comment>
<comment type="similarity">
    <text evidence="4">Belongs to the venom metalloproteinase (M12B) family. P-III subfamily. P-IIIa sub-subfamily.</text>
</comment>